<comment type="function">
    <text evidence="1">Catalyzes the anti-1,4-elimination of the C-3 phosphate and the C-6 proR hydrogen from 5-enolpyruvylshikimate-3-phosphate (EPSP) to yield chorismate, which is the branch point compound that serves as the starting substrate for the three terminal pathways of aromatic amino acid biosynthesis. This reaction introduces a second double bond into the aromatic ring system.</text>
</comment>
<comment type="catalytic activity">
    <reaction evidence="1">
        <text>5-O-(1-carboxyvinyl)-3-phosphoshikimate = chorismate + phosphate</text>
        <dbReference type="Rhea" id="RHEA:21020"/>
        <dbReference type="ChEBI" id="CHEBI:29748"/>
        <dbReference type="ChEBI" id="CHEBI:43474"/>
        <dbReference type="ChEBI" id="CHEBI:57701"/>
        <dbReference type="EC" id="4.2.3.5"/>
    </reaction>
</comment>
<comment type="cofactor">
    <cofactor evidence="1">
        <name>FMNH2</name>
        <dbReference type="ChEBI" id="CHEBI:57618"/>
    </cofactor>
    <text evidence="1">Reduced FMN (FMNH(2)).</text>
</comment>
<comment type="pathway">
    <text evidence="1">Metabolic intermediate biosynthesis; chorismate biosynthesis; chorismate from D-erythrose 4-phosphate and phosphoenolpyruvate: step 7/7.</text>
</comment>
<comment type="subunit">
    <text evidence="1">Homotetramer.</text>
</comment>
<comment type="similarity">
    <text evidence="1">Belongs to the chorismate synthase family.</text>
</comment>
<accession>B1HTD1</accession>
<feature type="chain" id="PRO_1000115367" description="Chorismate synthase">
    <location>
        <begin position="1"/>
        <end position="393"/>
    </location>
</feature>
<feature type="binding site" evidence="1">
    <location>
        <position position="39"/>
    </location>
    <ligand>
        <name>NADP(+)</name>
        <dbReference type="ChEBI" id="CHEBI:58349"/>
    </ligand>
</feature>
<feature type="binding site" evidence="1">
    <location>
        <position position="45"/>
    </location>
    <ligand>
        <name>NADP(+)</name>
        <dbReference type="ChEBI" id="CHEBI:58349"/>
    </ligand>
</feature>
<feature type="binding site" evidence="1">
    <location>
        <begin position="133"/>
        <end position="135"/>
    </location>
    <ligand>
        <name>FMN</name>
        <dbReference type="ChEBI" id="CHEBI:58210"/>
    </ligand>
</feature>
<feature type="binding site" evidence="1">
    <location>
        <begin position="256"/>
        <end position="257"/>
    </location>
    <ligand>
        <name>FMN</name>
        <dbReference type="ChEBI" id="CHEBI:58210"/>
    </ligand>
</feature>
<feature type="binding site" evidence="1">
    <location>
        <position position="301"/>
    </location>
    <ligand>
        <name>FMN</name>
        <dbReference type="ChEBI" id="CHEBI:58210"/>
    </ligand>
</feature>
<feature type="binding site" evidence="1">
    <location>
        <begin position="316"/>
        <end position="320"/>
    </location>
    <ligand>
        <name>FMN</name>
        <dbReference type="ChEBI" id="CHEBI:58210"/>
    </ligand>
</feature>
<feature type="binding site" evidence="1">
    <location>
        <position position="342"/>
    </location>
    <ligand>
        <name>FMN</name>
        <dbReference type="ChEBI" id="CHEBI:58210"/>
    </ligand>
</feature>
<proteinExistence type="inferred from homology"/>
<evidence type="ECO:0000255" key="1">
    <source>
        <dbReference type="HAMAP-Rule" id="MF_00300"/>
    </source>
</evidence>
<reference key="1">
    <citation type="journal article" date="2008" name="J. Bacteriol.">
        <title>Complete genome sequence of the mosquitocidal bacterium Bacillus sphaericus C3-41 and comparison with those of closely related Bacillus species.</title>
        <authorList>
            <person name="Hu X."/>
            <person name="Fan W."/>
            <person name="Han B."/>
            <person name="Liu H."/>
            <person name="Zheng D."/>
            <person name="Li Q."/>
            <person name="Dong W."/>
            <person name="Yan J."/>
            <person name="Gao M."/>
            <person name="Berry C."/>
            <person name="Yuan Z."/>
        </authorList>
    </citation>
    <scope>NUCLEOTIDE SEQUENCE [LARGE SCALE GENOMIC DNA]</scope>
    <source>
        <strain>C3-41</strain>
    </source>
</reference>
<dbReference type="EC" id="4.2.3.5" evidence="1"/>
<dbReference type="EMBL" id="CP000817">
    <property type="protein sequence ID" value="ACA39547.1"/>
    <property type="molecule type" value="Genomic_DNA"/>
</dbReference>
<dbReference type="RefSeq" id="WP_012293643.1">
    <property type="nucleotide sequence ID" value="NC_010382.1"/>
</dbReference>
<dbReference type="SMR" id="B1HTD1"/>
<dbReference type="EnsemblBacteria" id="ACA39547">
    <property type="protein sequence ID" value="ACA39547"/>
    <property type="gene ID" value="Bsph_1960"/>
</dbReference>
<dbReference type="KEGG" id="lsp:Bsph_1960"/>
<dbReference type="HOGENOM" id="CLU_034547_2_0_9"/>
<dbReference type="UniPathway" id="UPA00053">
    <property type="reaction ID" value="UER00090"/>
</dbReference>
<dbReference type="Proteomes" id="UP000002164">
    <property type="component" value="Chromosome"/>
</dbReference>
<dbReference type="GO" id="GO:0005829">
    <property type="term" value="C:cytosol"/>
    <property type="evidence" value="ECO:0007669"/>
    <property type="project" value="TreeGrafter"/>
</dbReference>
<dbReference type="GO" id="GO:0004107">
    <property type="term" value="F:chorismate synthase activity"/>
    <property type="evidence" value="ECO:0007669"/>
    <property type="project" value="UniProtKB-UniRule"/>
</dbReference>
<dbReference type="GO" id="GO:0010181">
    <property type="term" value="F:FMN binding"/>
    <property type="evidence" value="ECO:0007669"/>
    <property type="project" value="TreeGrafter"/>
</dbReference>
<dbReference type="GO" id="GO:0008652">
    <property type="term" value="P:amino acid biosynthetic process"/>
    <property type="evidence" value="ECO:0007669"/>
    <property type="project" value="UniProtKB-KW"/>
</dbReference>
<dbReference type="GO" id="GO:0009073">
    <property type="term" value="P:aromatic amino acid family biosynthetic process"/>
    <property type="evidence" value="ECO:0007669"/>
    <property type="project" value="UniProtKB-KW"/>
</dbReference>
<dbReference type="GO" id="GO:0009423">
    <property type="term" value="P:chorismate biosynthetic process"/>
    <property type="evidence" value="ECO:0007669"/>
    <property type="project" value="UniProtKB-UniRule"/>
</dbReference>
<dbReference type="CDD" id="cd07304">
    <property type="entry name" value="Chorismate_synthase"/>
    <property type="match status" value="1"/>
</dbReference>
<dbReference type="FunFam" id="3.60.150.10:FF:000002">
    <property type="entry name" value="Chorismate synthase"/>
    <property type="match status" value="1"/>
</dbReference>
<dbReference type="Gene3D" id="3.60.150.10">
    <property type="entry name" value="Chorismate synthase AroC"/>
    <property type="match status" value="1"/>
</dbReference>
<dbReference type="HAMAP" id="MF_00300">
    <property type="entry name" value="Chorismate_synth"/>
    <property type="match status" value="1"/>
</dbReference>
<dbReference type="InterPro" id="IPR000453">
    <property type="entry name" value="Chorismate_synth"/>
</dbReference>
<dbReference type="InterPro" id="IPR035904">
    <property type="entry name" value="Chorismate_synth_AroC_sf"/>
</dbReference>
<dbReference type="InterPro" id="IPR020541">
    <property type="entry name" value="Chorismate_synthase_CS"/>
</dbReference>
<dbReference type="NCBIfam" id="TIGR00033">
    <property type="entry name" value="aroC"/>
    <property type="match status" value="1"/>
</dbReference>
<dbReference type="NCBIfam" id="NF003793">
    <property type="entry name" value="PRK05382.1"/>
    <property type="match status" value="1"/>
</dbReference>
<dbReference type="PANTHER" id="PTHR21085">
    <property type="entry name" value="CHORISMATE SYNTHASE"/>
    <property type="match status" value="1"/>
</dbReference>
<dbReference type="PANTHER" id="PTHR21085:SF0">
    <property type="entry name" value="CHORISMATE SYNTHASE"/>
    <property type="match status" value="1"/>
</dbReference>
<dbReference type="Pfam" id="PF01264">
    <property type="entry name" value="Chorismate_synt"/>
    <property type="match status" value="1"/>
</dbReference>
<dbReference type="PIRSF" id="PIRSF001456">
    <property type="entry name" value="Chorismate_synth"/>
    <property type="match status" value="1"/>
</dbReference>
<dbReference type="SUPFAM" id="SSF103263">
    <property type="entry name" value="Chorismate synthase, AroC"/>
    <property type="match status" value="1"/>
</dbReference>
<dbReference type="PROSITE" id="PS00787">
    <property type="entry name" value="CHORISMATE_SYNTHASE_1"/>
    <property type="match status" value="1"/>
</dbReference>
<dbReference type="PROSITE" id="PS00788">
    <property type="entry name" value="CHORISMATE_SYNTHASE_2"/>
    <property type="match status" value="1"/>
</dbReference>
<dbReference type="PROSITE" id="PS00789">
    <property type="entry name" value="CHORISMATE_SYNTHASE_3"/>
    <property type="match status" value="1"/>
</dbReference>
<gene>
    <name evidence="1" type="primary">aroC</name>
    <name type="ordered locus">Bsph_1960</name>
</gene>
<sequence>MRYLTAGESHGPQLTTIIEGLPSLLPITAEKINHDLKRRQGGHGRGRRMQIETDTVEIVAGVRHGQTLGSPVALVVANDDWKHWTKIMGAEPLAEDVNPEDIKRQISRPRPGHADLVGGMKYGHRDLRNVLERSSARETTVRVAVGSVAKALLNELGISIVAHVTEIVGIKADTSLVEGKTVDEIRAIVEADPCYCVDPVASAKMVDAIDEAKKAGDSIGGVVEVIVEGMPAGIGSYVHYDRKLDAKLAAAMLSINAFKGVEFGLGFEMARRKGSEVHDEIIWTEEEGYTRATNRLGGLEGGMSTGMPIVVRGVMKPIPTLYKPLQSVDIETKEPFKASVERSDSCAVPAASVVAEHVIAWEIATVILEQFHSDQLPQLKAQIDEHRQYTKGF</sequence>
<organism>
    <name type="scientific">Lysinibacillus sphaericus (strain C3-41)</name>
    <dbReference type="NCBI Taxonomy" id="444177"/>
    <lineage>
        <taxon>Bacteria</taxon>
        <taxon>Bacillati</taxon>
        <taxon>Bacillota</taxon>
        <taxon>Bacilli</taxon>
        <taxon>Bacillales</taxon>
        <taxon>Bacillaceae</taxon>
        <taxon>Lysinibacillus</taxon>
    </lineage>
</organism>
<keyword id="KW-0028">Amino-acid biosynthesis</keyword>
<keyword id="KW-0057">Aromatic amino acid biosynthesis</keyword>
<keyword id="KW-0274">FAD</keyword>
<keyword id="KW-0285">Flavoprotein</keyword>
<keyword id="KW-0288">FMN</keyword>
<keyword id="KW-0456">Lyase</keyword>
<keyword id="KW-0521">NADP</keyword>
<protein>
    <recommendedName>
        <fullName evidence="1">Chorismate synthase</fullName>
        <shortName evidence="1">CS</shortName>
        <ecNumber evidence="1">4.2.3.5</ecNumber>
    </recommendedName>
    <alternativeName>
        <fullName evidence="1">5-enolpyruvylshikimate-3-phosphate phospholyase</fullName>
    </alternativeName>
</protein>
<name>AROC_LYSSC</name>